<comment type="function">
    <text evidence="3">An RNase that has endonuclease and 5'-3' exonuclease activity. The 5'-exonuclease activity acts on 5'-monophosphate but not 5'-triphosphate ends. Endonuclease activity can cleave within 4 nucleotides of the 5'-end of a triphosphorylated RNA. Plays the major role in pre-23S rRNA maturation, and a minor role in processing of pre-5S and pre-16S rRNA.</text>
</comment>
<comment type="cofactor">
    <cofactor evidence="2">
        <name>Zn(2+)</name>
        <dbReference type="ChEBI" id="CHEBI:29105"/>
    </cofactor>
    <text evidence="2">Binds up to 2 Zn(2+) ions per subunit. It is not clear if Zn(2+) or Mg(2+) is physiologically important.</text>
</comment>
<comment type="subunit">
    <text evidence="1">Homodimer.</text>
</comment>
<comment type="subcellular location">
    <subcellularLocation>
        <location evidence="2">Cytoplasm</location>
    </subcellularLocation>
</comment>
<comment type="disruption phenotype">
    <text evidence="3">Non-essential, it can be deleted. No effect on processing of furA-katG operon mRNA or of pre-5S rRNA processing. Complete loss of mature 23S rRNA. Minor effects on pre-16S rRNA processing. A double rnj-rne depletion mutant indicates this enzyme plays a role in degradation of previously processed pre-16S rRNAs and a decrease in mature 5S rRNA.</text>
</comment>
<comment type="similarity">
    <text evidence="2">Belongs to the metallo-beta-lactamase superfamily. RNA-metabolizing metallo-beta-lactamase-like family. Bacterial RNase J subfamily.</text>
</comment>
<feature type="chain" id="PRO_0000429578" description="Ribonuclease J">
    <location>
        <begin position="1"/>
        <end position="558"/>
    </location>
</feature>
<feature type="binding site" evidence="2">
    <location>
        <position position="81"/>
    </location>
    <ligand>
        <name>Zn(2+)</name>
        <dbReference type="ChEBI" id="CHEBI:29105"/>
        <label>1</label>
        <note>catalytic</note>
    </ligand>
</feature>
<feature type="binding site" evidence="2">
    <location>
        <position position="83"/>
    </location>
    <ligand>
        <name>Zn(2+)</name>
        <dbReference type="ChEBI" id="CHEBI:29105"/>
        <label>1</label>
        <note>catalytic</note>
    </ligand>
</feature>
<feature type="binding site" evidence="2">
    <location>
        <position position="85"/>
    </location>
    <ligand>
        <name>Zn(2+)</name>
        <dbReference type="ChEBI" id="CHEBI:29105"/>
        <label>2</label>
        <note>catalytic</note>
    </ligand>
</feature>
<feature type="binding site" evidence="2">
    <location>
        <position position="86"/>
    </location>
    <ligand>
        <name>Zn(2+)</name>
        <dbReference type="ChEBI" id="CHEBI:29105"/>
        <label>2</label>
        <note>catalytic</note>
    </ligand>
</feature>
<feature type="binding site" evidence="2">
    <location>
        <position position="148"/>
    </location>
    <ligand>
        <name>Zn(2+)</name>
        <dbReference type="ChEBI" id="CHEBI:29105"/>
        <label>1</label>
        <note>catalytic</note>
    </ligand>
</feature>
<feature type="binding site" evidence="2">
    <location>
        <position position="170"/>
    </location>
    <ligand>
        <name>Zn(2+)</name>
        <dbReference type="ChEBI" id="CHEBI:29105"/>
        <label>1</label>
        <note>catalytic</note>
    </ligand>
</feature>
<feature type="binding site" evidence="2">
    <location>
        <position position="170"/>
    </location>
    <ligand>
        <name>Zn(2+)</name>
        <dbReference type="ChEBI" id="CHEBI:29105"/>
        <label>2</label>
        <note>catalytic</note>
    </ligand>
</feature>
<feature type="binding site" evidence="2">
    <location>
        <begin position="371"/>
        <end position="375"/>
    </location>
    <ligand>
        <name>substrate</name>
    </ligand>
</feature>
<feature type="binding site" evidence="2">
    <location>
        <position position="397"/>
    </location>
    <ligand>
        <name>Zn(2+)</name>
        <dbReference type="ChEBI" id="CHEBI:29105"/>
        <label>2</label>
        <note>catalytic</note>
    </ligand>
</feature>
<feature type="mutagenesis site" description="Severely decreases 5'-3' exonuclease activity, retains considerable endonuclease activity." evidence="3">
    <original>DH</original>
    <variation>KA</variation>
    <location>
        <begin position="85"/>
        <end position="86"/>
    </location>
</feature>
<name>RNJ_MYCS2</name>
<accession>A0QVT2</accession>
<proteinExistence type="evidence at protein level"/>
<protein>
    <recommendedName>
        <fullName evidence="2">Ribonuclease J</fullName>
        <shortName evidence="2">RNase J</shortName>
        <ecNumber evidence="2">3.1.-.-</ecNumber>
    </recommendedName>
</protein>
<reference key="1">
    <citation type="submission" date="2006-10" db="EMBL/GenBank/DDBJ databases">
        <authorList>
            <person name="Fleischmann R.D."/>
            <person name="Dodson R.J."/>
            <person name="Haft D.H."/>
            <person name="Merkel J.S."/>
            <person name="Nelson W.C."/>
            <person name="Fraser C.M."/>
        </authorList>
    </citation>
    <scope>NUCLEOTIDE SEQUENCE [LARGE SCALE GENOMIC DNA]</scope>
    <source>
        <strain>ATCC 700084 / mc(2)155</strain>
    </source>
</reference>
<reference key="2">
    <citation type="journal article" date="2007" name="Genome Biol.">
        <title>Interrupted coding sequences in Mycobacterium smegmatis: authentic mutations or sequencing errors?</title>
        <authorList>
            <person name="Deshayes C."/>
            <person name="Perrodou E."/>
            <person name="Gallien S."/>
            <person name="Euphrasie D."/>
            <person name="Schaeffer C."/>
            <person name="Van-Dorsselaer A."/>
            <person name="Poch O."/>
            <person name="Lecompte O."/>
            <person name="Reyrat J.-M."/>
        </authorList>
    </citation>
    <scope>NUCLEOTIDE SEQUENCE [LARGE SCALE GENOMIC DNA]</scope>
    <source>
        <strain>ATCC 700084 / mc(2)155</strain>
    </source>
</reference>
<reference key="3">
    <citation type="journal article" date="2009" name="Genome Res.">
        <title>Ortho-proteogenomics: multiple proteomes investigation through orthology and a new MS-based protocol.</title>
        <authorList>
            <person name="Gallien S."/>
            <person name="Perrodou E."/>
            <person name="Carapito C."/>
            <person name="Deshayes C."/>
            <person name="Reyrat J.-M."/>
            <person name="Van Dorsselaer A."/>
            <person name="Poch O."/>
            <person name="Schaeffer C."/>
            <person name="Lecompte O."/>
        </authorList>
    </citation>
    <scope>NUCLEOTIDE SEQUENCE [LARGE SCALE GENOMIC DNA]</scope>
    <source>
        <strain>ATCC 700084 / mc(2)155</strain>
    </source>
</reference>
<reference key="4">
    <citation type="journal article" date="2011" name="Mol. Microbiol.">
        <title>Mycobacterium smegmatis RNase J is a 5'-3' exo-/endoribonuclease and both RNase J and RNase E are involved in ribosomal RNA maturation.</title>
        <authorList>
            <person name="Taverniti V."/>
            <person name="Forti F."/>
            <person name="Ghisotti D."/>
            <person name="Putzer H."/>
        </authorList>
    </citation>
    <scope>FUNCTION AS AN EXO- AND ENDORIBONUCLEASE</scope>
    <scope>DISRUPTION PHENOTYPE</scope>
    <scope>MUTAGENESIS OF 85-ASP-HIS-86</scope>
    <source>
        <strain>ATCC 700084 / mc(2)155</strain>
    </source>
</reference>
<gene>
    <name evidence="2" type="primary">rnj</name>
    <name type="ordered locus">MSMEG_2685</name>
    <name type="ordered locus">MSMEI_2620</name>
</gene>
<evidence type="ECO:0000250" key="1"/>
<evidence type="ECO:0000255" key="2">
    <source>
        <dbReference type="HAMAP-Rule" id="MF_01491"/>
    </source>
</evidence>
<evidence type="ECO:0000269" key="3">
    <source>
    </source>
</evidence>
<dbReference type="EC" id="3.1.-.-" evidence="2"/>
<dbReference type="EMBL" id="CP000480">
    <property type="protein sequence ID" value="ABK74200.1"/>
    <property type="molecule type" value="Genomic_DNA"/>
</dbReference>
<dbReference type="EMBL" id="CP001663">
    <property type="protein sequence ID" value="AFP39088.1"/>
    <property type="molecule type" value="Genomic_DNA"/>
</dbReference>
<dbReference type="RefSeq" id="WP_003894070.1">
    <property type="nucleotide sequence ID" value="NZ_SIJM01000059.1"/>
</dbReference>
<dbReference type="RefSeq" id="YP_887020.1">
    <property type="nucleotide sequence ID" value="NC_008596.1"/>
</dbReference>
<dbReference type="SMR" id="A0QVT2"/>
<dbReference type="STRING" id="246196.MSMEG_2685"/>
<dbReference type="PaxDb" id="246196-MSMEI_2620"/>
<dbReference type="KEGG" id="msb:LJ00_13360"/>
<dbReference type="KEGG" id="msg:MSMEI_2620"/>
<dbReference type="KEGG" id="msm:MSMEG_2685"/>
<dbReference type="PATRIC" id="fig|246196.19.peg.2652"/>
<dbReference type="eggNOG" id="COG0595">
    <property type="taxonomic scope" value="Bacteria"/>
</dbReference>
<dbReference type="OrthoDB" id="9770211at2"/>
<dbReference type="Proteomes" id="UP000000757">
    <property type="component" value="Chromosome"/>
</dbReference>
<dbReference type="Proteomes" id="UP000006158">
    <property type="component" value="Chromosome"/>
</dbReference>
<dbReference type="GO" id="GO:0005737">
    <property type="term" value="C:cytoplasm"/>
    <property type="evidence" value="ECO:0007669"/>
    <property type="project" value="UniProtKB-SubCell"/>
</dbReference>
<dbReference type="GO" id="GO:0004534">
    <property type="term" value="F:5'-3' RNA exonuclease activity"/>
    <property type="evidence" value="ECO:0000314"/>
    <property type="project" value="UniProtKB"/>
</dbReference>
<dbReference type="GO" id="GO:0003723">
    <property type="term" value="F:RNA binding"/>
    <property type="evidence" value="ECO:0007669"/>
    <property type="project" value="UniProtKB-UniRule"/>
</dbReference>
<dbReference type="GO" id="GO:0004521">
    <property type="term" value="F:RNA endonuclease activity"/>
    <property type="evidence" value="ECO:0000314"/>
    <property type="project" value="UniProtKB"/>
</dbReference>
<dbReference type="GO" id="GO:0008270">
    <property type="term" value="F:zinc ion binding"/>
    <property type="evidence" value="ECO:0007669"/>
    <property type="project" value="InterPro"/>
</dbReference>
<dbReference type="GO" id="GO:0006364">
    <property type="term" value="P:rRNA processing"/>
    <property type="evidence" value="ECO:0000314"/>
    <property type="project" value="UniProtKB"/>
</dbReference>
<dbReference type="CDD" id="cd07714">
    <property type="entry name" value="RNaseJ_MBL-fold"/>
    <property type="match status" value="1"/>
</dbReference>
<dbReference type="FunFam" id="3.40.50.10710:FF:000001">
    <property type="entry name" value="Ribonuclease J"/>
    <property type="match status" value="1"/>
</dbReference>
<dbReference type="Gene3D" id="3.10.20.580">
    <property type="match status" value="1"/>
</dbReference>
<dbReference type="Gene3D" id="3.40.50.10710">
    <property type="entry name" value="Metallo-hydrolase/oxidoreductase"/>
    <property type="match status" value="1"/>
</dbReference>
<dbReference type="Gene3D" id="3.60.15.10">
    <property type="entry name" value="Ribonuclease Z/Hydroxyacylglutathione hydrolase-like"/>
    <property type="match status" value="1"/>
</dbReference>
<dbReference type="HAMAP" id="MF_01491">
    <property type="entry name" value="RNase_J_bact"/>
    <property type="match status" value="1"/>
</dbReference>
<dbReference type="InterPro" id="IPR001279">
    <property type="entry name" value="Metallo-B-lactamas"/>
</dbReference>
<dbReference type="InterPro" id="IPR036866">
    <property type="entry name" value="RibonucZ/Hydroxyglut_hydro"/>
</dbReference>
<dbReference type="InterPro" id="IPR011108">
    <property type="entry name" value="RMMBL"/>
</dbReference>
<dbReference type="InterPro" id="IPR004613">
    <property type="entry name" value="RNase_J"/>
</dbReference>
<dbReference type="InterPro" id="IPR042173">
    <property type="entry name" value="RNase_J_2"/>
</dbReference>
<dbReference type="InterPro" id="IPR055132">
    <property type="entry name" value="RNase_J_b_CASP"/>
</dbReference>
<dbReference type="InterPro" id="IPR030854">
    <property type="entry name" value="RNase_J_bac"/>
</dbReference>
<dbReference type="InterPro" id="IPR041636">
    <property type="entry name" value="RNase_J_C"/>
</dbReference>
<dbReference type="NCBIfam" id="TIGR00649">
    <property type="entry name" value="MG423"/>
    <property type="match status" value="1"/>
</dbReference>
<dbReference type="PANTHER" id="PTHR43694">
    <property type="entry name" value="RIBONUCLEASE J"/>
    <property type="match status" value="1"/>
</dbReference>
<dbReference type="PANTHER" id="PTHR43694:SF1">
    <property type="entry name" value="RIBONUCLEASE J"/>
    <property type="match status" value="1"/>
</dbReference>
<dbReference type="Pfam" id="PF12706">
    <property type="entry name" value="Lactamase_B_2"/>
    <property type="match status" value="1"/>
</dbReference>
<dbReference type="Pfam" id="PF07521">
    <property type="entry name" value="RMMBL"/>
    <property type="match status" value="1"/>
</dbReference>
<dbReference type="Pfam" id="PF22505">
    <property type="entry name" value="RNase_J_b_CASP"/>
    <property type="match status" value="1"/>
</dbReference>
<dbReference type="Pfam" id="PF17770">
    <property type="entry name" value="RNase_J_C"/>
    <property type="match status" value="1"/>
</dbReference>
<dbReference type="PIRSF" id="PIRSF004803">
    <property type="entry name" value="RnjA"/>
    <property type="match status" value="1"/>
</dbReference>
<dbReference type="SMART" id="SM00849">
    <property type="entry name" value="Lactamase_B"/>
    <property type="match status" value="1"/>
</dbReference>
<dbReference type="SUPFAM" id="SSF56281">
    <property type="entry name" value="Metallo-hydrolase/oxidoreductase"/>
    <property type="match status" value="1"/>
</dbReference>
<organism>
    <name type="scientific">Mycolicibacterium smegmatis (strain ATCC 700084 / mc(2)155)</name>
    <name type="common">Mycobacterium smegmatis</name>
    <dbReference type="NCBI Taxonomy" id="246196"/>
    <lineage>
        <taxon>Bacteria</taxon>
        <taxon>Bacillati</taxon>
        <taxon>Actinomycetota</taxon>
        <taxon>Actinomycetes</taxon>
        <taxon>Mycobacteriales</taxon>
        <taxon>Mycobacteriaceae</taxon>
        <taxon>Mycolicibacterium</taxon>
    </lineage>
</organism>
<sequence>MSAELAPPPPLAPGGLRVTALGGISEIGRNMTVFEHLGRLLIVDCGVLFPGHDEPGVDLILPDLRHIEDRLDEIEALVVTHAHEDHIGAIPFLLKLRPDIPVVGSKFTIALVREKCREHRLKPKFVEVAERQSSQHGVFECEYFAVNHSIPGCLAVAIHTGAGTVLHTGDIKLDQLPLDGRPTDLPGMSRLGDAGVDLFLCDSTNSEHPGVSPSESEVGPTLHRLIRGAEGRVIVACFASNVDRVQQIIDAAVALGRRVSFVGRSMVRNMGIARELGYLKVDDSDILDIAAAEMMPPDRVVLITTGTQGEPMAALSRMSRGEHRSITLTSGDLIILSSSLIPGNEEAVYGVIDSLSKIGARVVTNAQARVHVSGHAYAGELLFLYNGVRPRNVMPVHGTWRHLRANAALAASTGVPPENIVLAENGVSVDLVAGRASISGAVTVGKMFVDGLITGDVGDATLGERLILSSGFVSITVVVHRGTGRPAGPAHLISRGFSEDPKALEPVAQKVERELEALAADNVTDPTRIAQAVRRTVGKWVGETYRRQPMIVPTVIEI</sequence>
<keyword id="KW-0963">Cytoplasm</keyword>
<keyword id="KW-0255">Endonuclease</keyword>
<keyword id="KW-0269">Exonuclease</keyword>
<keyword id="KW-0378">Hydrolase</keyword>
<keyword id="KW-0479">Metal-binding</keyword>
<keyword id="KW-0540">Nuclease</keyword>
<keyword id="KW-1185">Reference proteome</keyword>
<keyword id="KW-0694">RNA-binding</keyword>
<keyword id="KW-0698">rRNA processing</keyword>
<keyword id="KW-0862">Zinc</keyword>